<accession>A1K2H5</accession>
<evidence type="ECO:0000255" key="1">
    <source>
        <dbReference type="HAMAP-Rule" id="MF_01633"/>
    </source>
</evidence>
<organism>
    <name type="scientific">Azoarcus sp. (strain BH72)</name>
    <dbReference type="NCBI Taxonomy" id="418699"/>
    <lineage>
        <taxon>Bacteria</taxon>
        <taxon>Pseudomonadati</taxon>
        <taxon>Pseudomonadota</taxon>
        <taxon>Betaproteobacteria</taxon>
        <taxon>Rhodocyclales</taxon>
        <taxon>Zoogloeaceae</taxon>
        <taxon>Azoarcus</taxon>
    </lineage>
</organism>
<keyword id="KW-0067">ATP-binding</keyword>
<keyword id="KW-0436">Ligase</keyword>
<keyword id="KW-0479">Metal-binding</keyword>
<keyword id="KW-0547">Nucleotide-binding</keyword>
<keyword id="KW-0671">Queuosine biosynthesis</keyword>
<keyword id="KW-1185">Reference proteome</keyword>
<keyword id="KW-0862">Zinc</keyword>
<gene>
    <name evidence="1" type="primary">queC</name>
    <name type="ordered locus">azo0413</name>
</gene>
<feature type="chain" id="PRO_0000336890" description="7-cyano-7-deazaguanine synthase">
    <location>
        <begin position="1"/>
        <end position="228"/>
    </location>
</feature>
<feature type="binding site" evidence="1">
    <location>
        <begin position="11"/>
        <end position="21"/>
    </location>
    <ligand>
        <name>ATP</name>
        <dbReference type="ChEBI" id="CHEBI:30616"/>
    </ligand>
</feature>
<feature type="binding site" evidence="1">
    <location>
        <position position="191"/>
    </location>
    <ligand>
        <name>Zn(2+)</name>
        <dbReference type="ChEBI" id="CHEBI:29105"/>
    </ligand>
</feature>
<feature type="binding site" evidence="1">
    <location>
        <position position="201"/>
    </location>
    <ligand>
        <name>Zn(2+)</name>
        <dbReference type="ChEBI" id="CHEBI:29105"/>
    </ligand>
</feature>
<feature type="binding site" evidence="1">
    <location>
        <position position="204"/>
    </location>
    <ligand>
        <name>Zn(2+)</name>
        <dbReference type="ChEBI" id="CHEBI:29105"/>
    </ligand>
</feature>
<feature type="binding site" evidence="1">
    <location>
        <position position="207"/>
    </location>
    <ligand>
        <name>Zn(2+)</name>
        <dbReference type="ChEBI" id="CHEBI:29105"/>
    </ligand>
</feature>
<dbReference type="EC" id="6.3.4.20" evidence="1"/>
<dbReference type="EMBL" id="AM406670">
    <property type="protein sequence ID" value="CAL93030.1"/>
    <property type="molecule type" value="Genomic_DNA"/>
</dbReference>
<dbReference type="RefSeq" id="WP_011764148.1">
    <property type="nucleotide sequence ID" value="NC_008702.1"/>
</dbReference>
<dbReference type="SMR" id="A1K2H5"/>
<dbReference type="STRING" id="62928.azo0413"/>
<dbReference type="KEGG" id="azo:azo0413"/>
<dbReference type="eggNOG" id="COG0603">
    <property type="taxonomic scope" value="Bacteria"/>
</dbReference>
<dbReference type="HOGENOM" id="CLU_081854_1_1_4"/>
<dbReference type="UniPathway" id="UPA00391"/>
<dbReference type="Proteomes" id="UP000002588">
    <property type="component" value="Chromosome"/>
</dbReference>
<dbReference type="GO" id="GO:0005524">
    <property type="term" value="F:ATP binding"/>
    <property type="evidence" value="ECO:0007669"/>
    <property type="project" value="UniProtKB-UniRule"/>
</dbReference>
<dbReference type="GO" id="GO:0016879">
    <property type="term" value="F:ligase activity, forming carbon-nitrogen bonds"/>
    <property type="evidence" value="ECO:0007669"/>
    <property type="project" value="UniProtKB-UniRule"/>
</dbReference>
<dbReference type="GO" id="GO:0008270">
    <property type="term" value="F:zinc ion binding"/>
    <property type="evidence" value="ECO:0007669"/>
    <property type="project" value="UniProtKB-UniRule"/>
</dbReference>
<dbReference type="GO" id="GO:0008616">
    <property type="term" value="P:queuosine biosynthetic process"/>
    <property type="evidence" value="ECO:0007669"/>
    <property type="project" value="UniProtKB-UniRule"/>
</dbReference>
<dbReference type="CDD" id="cd01995">
    <property type="entry name" value="QueC-like"/>
    <property type="match status" value="1"/>
</dbReference>
<dbReference type="FunFam" id="3.40.50.620:FF:000131">
    <property type="entry name" value="7-cyano-7-deazaguanine synthase"/>
    <property type="match status" value="1"/>
</dbReference>
<dbReference type="Gene3D" id="3.40.50.620">
    <property type="entry name" value="HUPs"/>
    <property type="match status" value="1"/>
</dbReference>
<dbReference type="HAMAP" id="MF_01633">
    <property type="entry name" value="QueC"/>
    <property type="match status" value="1"/>
</dbReference>
<dbReference type="InterPro" id="IPR018317">
    <property type="entry name" value="QueC"/>
</dbReference>
<dbReference type="InterPro" id="IPR014729">
    <property type="entry name" value="Rossmann-like_a/b/a_fold"/>
</dbReference>
<dbReference type="NCBIfam" id="TIGR00364">
    <property type="entry name" value="7-cyano-7-deazaguanine synthase QueC"/>
    <property type="match status" value="1"/>
</dbReference>
<dbReference type="PANTHER" id="PTHR42914">
    <property type="entry name" value="7-CYANO-7-DEAZAGUANINE SYNTHASE"/>
    <property type="match status" value="1"/>
</dbReference>
<dbReference type="PANTHER" id="PTHR42914:SF1">
    <property type="entry name" value="7-CYANO-7-DEAZAGUANINE SYNTHASE"/>
    <property type="match status" value="1"/>
</dbReference>
<dbReference type="Pfam" id="PF06508">
    <property type="entry name" value="QueC"/>
    <property type="match status" value="1"/>
</dbReference>
<dbReference type="PIRSF" id="PIRSF006293">
    <property type="entry name" value="ExsB"/>
    <property type="match status" value="1"/>
</dbReference>
<dbReference type="SUPFAM" id="SSF52402">
    <property type="entry name" value="Adenine nucleotide alpha hydrolases-like"/>
    <property type="match status" value="1"/>
</dbReference>
<protein>
    <recommendedName>
        <fullName evidence="1">7-cyano-7-deazaguanine synthase</fullName>
        <ecNumber evidence="1">6.3.4.20</ecNumber>
    </recommendedName>
    <alternativeName>
        <fullName evidence="1">7-cyano-7-carbaguanine synthase</fullName>
    </alternativeName>
    <alternativeName>
        <fullName evidence="1">PreQ(0) synthase</fullName>
    </alternativeName>
    <alternativeName>
        <fullName evidence="1">Queuosine biosynthesis protein QueC</fullName>
    </alternativeName>
</protein>
<reference key="1">
    <citation type="journal article" date="2006" name="Nat. Biotechnol.">
        <title>Complete genome of the mutualistic, N2-fixing grass endophyte Azoarcus sp. strain BH72.</title>
        <authorList>
            <person name="Krause A."/>
            <person name="Ramakumar A."/>
            <person name="Bartels D."/>
            <person name="Battistoni F."/>
            <person name="Bekel T."/>
            <person name="Boch J."/>
            <person name="Boehm M."/>
            <person name="Friedrich F."/>
            <person name="Hurek T."/>
            <person name="Krause L."/>
            <person name="Linke B."/>
            <person name="McHardy A.C."/>
            <person name="Sarkar A."/>
            <person name="Schneiker S."/>
            <person name="Syed A.A."/>
            <person name="Thauer R."/>
            <person name="Vorhoelter F.-J."/>
            <person name="Weidner S."/>
            <person name="Puehler A."/>
            <person name="Reinhold-Hurek B."/>
            <person name="Kaiser O."/>
            <person name="Goesmann A."/>
        </authorList>
    </citation>
    <scope>NUCLEOTIDE SEQUENCE [LARGE SCALE GENOMIC DNA]</scope>
    <source>
        <strain>BH72</strain>
    </source>
</reference>
<sequence length="228" mass="23928">MTDLPRAVVLLSGGLDSATCLAIARDMGLETYALSVAYGQRHAAELTASRRVAHALGAREHRVASVSLGEFGGSALTDPAIAVPEDAAPGGIPVTYVPARNTVMLSMALAWAEVLGARHIFVGVNAVDYSGYPDCRPAFIQAFETMANLATKAGVEGHPTTIHAPLIDLSKADIIRRGVALGVDYGLTVSCYQADDDGRACGRCDACRLRREGFAAAGIADPTRYQAR</sequence>
<comment type="function">
    <text evidence="1">Catalyzes the ATP-dependent conversion of 7-carboxy-7-deazaguanine (CDG) to 7-cyano-7-deazaguanine (preQ(0)).</text>
</comment>
<comment type="catalytic activity">
    <reaction evidence="1">
        <text>7-carboxy-7-deazaguanine + NH4(+) + ATP = 7-cyano-7-deazaguanine + ADP + phosphate + H2O + H(+)</text>
        <dbReference type="Rhea" id="RHEA:27982"/>
        <dbReference type="ChEBI" id="CHEBI:15377"/>
        <dbReference type="ChEBI" id="CHEBI:15378"/>
        <dbReference type="ChEBI" id="CHEBI:28938"/>
        <dbReference type="ChEBI" id="CHEBI:30616"/>
        <dbReference type="ChEBI" id="CHEBI:43474"/>
        <dbReference type="ChEBI" id="CHEBI:45075"/>
        <dbReference type="ChEBI" id="CHEBI:61036"/>
        <dbReference type="ChEBI" id="CHEBI:456216"/>
        <dbReference type="EC" id="6.3.4.20"/>
    </reaction>
</comment>
<comment type="cofactor">
    <cofactor evidence="1">
        <name>Zn(2+)</name>
        <dbReference type="ChEBI" id="CHEBI:29105"/>
    </cofactor>
    <text evidence="1">Binds 1 zinc ion per subunit.</text>
</comment>
<comment type="pathway">
    <text evidence="1">Purine metabolism; 7-cyano-7-deazaguanine biosynthesis.</text>
</comment>
<comment type="similarity">
    <text evidence="1">Belongs to the QueC family.</text>
</comment>
<proteinExistence type="inferred from homology"/>
<name>QUEC_AZOSB</name>